<organism>
    <name type="scientific">Lactobacillus acidophilus (strain ATCC 700396 / NCK56 / N2 / NCFM)</name>
    <dbReference type="NCBI Taxonomy" id="272621"/>
    <lineage>
        <taxon>Bacteria</taxon>
        <taxon>Bacillati</taxon>
        <taxon>Bacillota</taxon>
        <taxon>Bacilli</taxon>
        <taxon>Lactobacillales</taxon>
        <taxon>Lactobacillaceae</taxon>
        <taxon>Lactobacillus</taxon>
    </lineage>
</organism>
<sequence length="516" mass="57721">MAKNLEDFDKIIVLDFGSQYNQLITRRIRDFGIYSELLPHDLSIEKIKEMNPKGIIFSGGPNSVYDDGALKVDPEIFKLGIPILGICYGMQLMSYDLGGKVERAENKEYGRANITVEDPDSALFKGLPTKQYVWMSHGDLVTQAPEGFEVTASSKNCPIAAIANPDKKFYGIQFHAEVRNSEYGLDILKHFAFDVCGAVANWTMADFIDMQVDEIRKEVGDKKVILGLSGGVDSSVTATLLHKAIGDQLTAIFVDHGMLRKDEGDQVMKALNKDLGVNIIRVNAQERFLNKLKGVTDPEQKRKIIGKEFIEVFNEEAKKLKDVDFLAQGTLYTDVIESGTNTAQTIKSHHNVGGLPEDMNFKLIEPLRKLFKDEVRELGEKLGIPHDLVWRQPFPGPGLGIRVLGEVTEDKLKIVRESDAILREEIKKAGLQEKIWQYFTVLPGIRSVGVMGDGRTYDYTIGIRAVTSIDGMTADFAQIPWDVLGHISDRIVNEVDNVNRIVYDVTSKPPSTIEWE</sequence>
<protein>
    <recommendedName>
        <fullName evidence="1">GMP synthase [glutamine-hydrolyzing]</fullName>
        <ecNumber evidence="1">6.3.5.2</ecNumber>
    </recommendedName>
    <alternativeName>
        <fullName evidence="1">GMP synthetase</fullName>
    </alternativeName>
    <alternativeName>
        <fullName evidence="1">Glutamine amidotransferase</fullName>
    </alternativeName>
</protein>
<feature type="chain" id="PRO_0000229435" description="GMP synthase [glutamine-hydrolyzing]">
    <location>
        <begin position="1"/>
        <end position="516"/>
    </location>
</feature>
<feature type="domain" description="Glutamine amidotransferase type-1" evidence="1">
    <location>
        <begin position="10"/>
        <end position="201"/>
    </location>
</feature>
<feature type="domain" description="GMPS ATP-PPase" evidence="1">
    <location>
        <begin position="202"/>
        <end position="391"/>
    </location>
</feature>
<feature type="active site" description="Nucleophile" evidence="1">
    <location>
        <position position="87"/>
    </location>
</feature>
<feature type="active site" evidence="1">
    <location>
        <position position="175"/>
    </location>
</feature>
<feature type="active site" evidence="1">
    <location>
        <position position="177"/>
    </location>
</feature>
<feature type="binding site" evidence="1">
    <location>
        <begin position="229"/>
        <end position="235"/>
    </location>
    <ligand>
        <name>ATP</name>
        <dbReference type="ChEBI" id="CHEBI:30616"/>
    </ligand>
</feature>
<name>GUAA_LACAC</name>
<gene>
    <name evidence="1" type="primary">guaA</name>
    <name type="ordered locus">LBA0245</name>
</gene>
<evidence type="ECO:0000255" key="1">
    <source>
        <dbReference type="HAMAP-Rule" id="MF_00344"/>
    </source>
</evidence>
<keyword id="KW-0067">ATP-binding</keyword>
<keyword id="KW-0315">Glutamine amidotransferase</keyword>
<keyword id="KW-0332">GMP biosynthesis</keyword>
<keyword id="KW-0436">Ligase</keyword>
<keyword id="KW-0547">Nucleotide-binding</keyword>
<keyword id="KW-0658">Purine biosynthesis</keyword>
<keyword id="KW-1185">Reference proteome</keyword>
<proteinExistence type="inferred from homology"/>
<comment type="function">
    <text evidence="1">Catalyzes the synthesis of GMP from XMP.</text>
</comment>
<comment type="catalytic activity">
    <reaction evidence="1">
        <text>XMP + L-glutamine + ATP + H2O = GMP + L-glutamate + AMP + diphosphate + 2 H(+)</text>
        <dbReference type="Rhea" id="RHEA:11680"/>
        <dbReference type="ChEBI" id="CHEBI:15377"/>
        <dbReference type="ChEBI" id="CHEBI:15378"/>
        <dbReference type="ChEBI" id="CHEBI:29985"/>
        <dbReference type="ChEBI" id="CHEBI:30616"/>
        <dbReference type="ChEBI" id="CHEBI:33019"/>
        <dbReference type="ChEBI" id="CHEBI:57464"/>
        <dbReference type="ChEBI" id="CHEBI:58115"/>
        <dbReference type="ChEBI" id="CHEBI:58359"/>
        <dbReference type="ChEBI" id="CHEBI:456215"/>
        <dbReference type="EC" id="6.3.5.2"/>
    </reaction>
</comment>
<comment type="pathway">
    <text evidence="1">Purine metabolism; GMP biosynthesis; GMP from XMP (L-Gln route): step 1/1.</text>
</comment>
<comment type="subunit">
    <text evidence="1">Homodimer.</text>
</comment>
<dbReference type="EC" id="6.3.5.2" evidence="1"/>
<dbReference type="EMBL" id="CP000033">
    <property type="protein sequence ID" value="AAV42138.1"/>
    <property type="molecule type" value="Genomic_DNA"/>
</dbReference>
<dbReference type="RefSeq" id="WP_003548925.1">
    <property type="nucleotide sequence ID" value="NC_006814.3"/>
</dbReference>
<dbReference type="RefSeq" id="YP_193169.1">
    <property type="nucleotide sequence ID" value="NC_006814.3"/>
</dbReference>
<dbReference type="SMR" id="Q5FMD6"/>
<dbReference type="STRING" id="272621.LBA0245"/>
<dbReference type="MEROPS" id="C26.957"/>
<dbReference type="GeneID" id="93290653"/>
<dbReference type="KEGG" id="lac:LBA0245"/>
<dbReference type="PATRIC" id="fig|272621.13.peg.233"/>
<dbReference type="eggNOG" id="COG0519">
    <property type="taxonomic scope" value="Bacteria"/>
</dbReference>
<dbReference type="HOGENOM" id="CLU_014340_0_5_9"/>
<dbReference type="OrthoDB" id="9802219at2"/>
<dbReference type="BioCyc" id="LACI272621:G1G49-236-MONOMER"/>
<dbReference type="UniPathway" id="UPA00189">
    <property type="reaction ID" value="UER00296"/>
</dbReference>
<dbReference type="Proteomes" id="UP000006381">
    <property type="component" value="Chromosome"/>
</dbReference>
<dbReference type="GO" id="GO:0005829">
    <property type="term" value="C:cytosol"/>
    <property type="evidence" value="ECO:0007669"/>
    <property type="project" value="TreeGrafter"/>
</dbReference>
<dbReference type="GO" id="GO:0005524">
    <property type="term" value="F:ATP binding"/>
    <property type="evidence" value="ECO:0007669"/>
    <property type="project" value="UniProtKB-UniRule"/>
</dbReference>
<dbReference type="GO" id="GO:0003921">
    <property type="term" value="F:GMP synthase activity"/>
    <property type="evidence" value="ECO:0007669"/>
    <property type="project" value="InterPro"/>
</dbReference>
<dbReference type="CDD" id="cd01742">
    <property type="entry name" value="GATase1_GMP_Synthase"/>
    <property type="match status" value="1"/>
</dbReference>
<dbReference type="CDD" id="cd01997">
    <property type="entry name" value="GMP_synthase_C"/>
    <property type="match status" value="1"/>
</dbReference>
<dbReference type="FunFam" id="3.30.300.10:FF:000002">
    <property type="entry name" value="GMP synthase [glutamine-hydrolyzing]"/>
    <property type="match status" value="1"/>
</dbReference>
<dbReference type="FunFam" id="3.40.50.620:FF:000001">
    <property type="entry name" value="GMP synthase [glutamine-hydrolyzing]"/>
    <property type="match status" value="1"/>
</dbReference>
<dbReference type="FunFam" id="3.40.50.880:FF:000001">
    <property type="entry name" value="GMP synthase [glutamine-hydrolyzing]"/>
    <property type="match status" value="1"/>
</dbReference>
<dbReference type="Gene3D" id="3.30.300.10">
    <property type="match status" value="1"/>
</dbReference>
<dbReference type="Gene3D" id="3.40.50.880">
    <property type="match status" value="1"/>
</dbReference>
<dbReference type="Gene3D" id="3.40.50.620">
    <property type="entry name" value="HUPs"/>
    <property type="match status" value="1"/>
</dbReference>
<dbReference type="HAMAP" id="MF_00344">
    <property type="entry name" value="GMP_synthase"/>
    <property type="match status" value="1"/>
</dbReference>
<dbReference type="InterPro" id="IPR029062">
    <property type="entry name" value="Class_I_gatase-like"/>
</dbReference>
<dbReference type="InterPro" id="IPR017926">
    <property type="entry name" value="GATASE"/>
</dbReference>
<dbReference type="InterPro" id="IPR001674">
    <property type="entry name" value="GMP_synth_C"/>
</dbReference>
<dbReference type="InterPro" id="IPR004739">
    <property type="entry name" value="GMP_synth_GATase"/>
</dbReference>
<dbReference type="InterPro" id="IPR022955">
    <property type="entry name" value="GMP_synthase"/>
</dbReference>
<dbReference type="InterPro" id="IPR025777">
    <property type="entry name" value="GMPS_ATP_PPase_dom"/>
</dbReference>
<dbReference type="InterPro" id="IPR022310">
    <property type="entry name" value="NAD/GMP_synthase"/>
</dbReference>
<dbReference type="InterPro" id="IPR014729">
    <property type="entry name" value="Rossmann-like_a/b/a_fold"/>
</dbReference>
<dbReference type="NCBIfam" id="TIGR00884">
    <property type="entry name" value="guaA_Cterm"/>
    <property type="match status" value="1"/>
</dbReference>
<dbReference type="NCBIfam" id="TIGR00888">
    <property type="entry name" value="guaA_Nterm"/>
    <property type="match status" value="1"/>
</dbReference>
<dbReference type="NCBIfam" id="NF000848">
    <property type="entry name" value="PRK00074.1"/>
    <property type="match status" value="1"/>
</dbReference>
<dbReference type="PANTHER" id="PTHR11922:SF2">
    <property type="entry name" value="GMP SYNTHASE [GLUTAMINE-HYDROLYZING]"/>
    <property type="match status" value="1"/>
</dbReference>
<dbReference type="PANTHER" id="PTHR11922">
    <property type="entry name" value="GMP SYNTHASE-RELATED"/>
    <property type="match status" value="1"/>
</dbReference>
<dbReference type="Pfam" id="PF00117">
    <property type="entry name" value="GATase"/>
    <property type="match status" value="1"/>
</dbReference>
<dbReference type="Pfam" id="PF00958">
    <property type="entry name" value="GMP_synt_C"/>
    <property type="match status" value="1"/>
</dbReference>
<dbReference type="Pfam" id="PF02540">
    <property type="entry name" value="NAD_synthase"/>
    <property type="match status" value="1"/>
</dbReference>
<dbReference type="PRINTS" id="PR00099">
    <property type="entry name" value="CPSGATASE"/>
</dbReference>
<dbReference type="PRINTS" id="PR00096">
    <property type="entry name" value="GATASE"/>
</dbReference>
<dbReference type="SUPFAM" id="SSF52402">
    <property type="entry name" value="Adenine nucleotide alpha hydrolases-like"/>
    <property type="match status" value="1"/>
</dbReference>
<dbReference type="SUPFAM" id="SSF52317">
    <property type="entry name" value="Class I glutamine amidotransferase-like"/>
    <property type="match status" value="1"/>
</dbReference>
<dbReference type="PROSITE" id="PS51273">
    <property type="entry name" value="GATASE_TYPE_1"/>
    <property type="match status" value="1"/>
</dbReference>
<dbReference type="PROSITE" id="PS51553">
    <property type="entry name" value="GMPS_ATP_PPASE"/>
    <property type="match status" value="1"/>
</dbReference>
<reference key="1">
    <citation type="journal article" date="2005" name="Proc. Natl. Acad. Sci. U.S.A.">
        <title>Complete genome sequence of the probiotic lactic acid bacterium Lactobacillus acidophilus NCFM.</title>
        <authorList>
            <person name="Altermann E."/>
            <person name="Russell W.M."/>
            <person name="Azcarate-Peril M.A."/>
            <person name="Barrangou R."/>
            <person name="Buck B.L."/>
            <person name="McAuliffe O."/>
            <person name="Souther N."/>
            <person name="Dobson A."/>
            <person name="Duong T."/>
            <person name="Callanan M."/>
            <person name="Lick S."/>
            <person name="Hamrick A."/>
            <person name="Cano R."/>
            <person name="Klaenhammer T.R."/>
        </authorList>
    </citation>
    <scope>NUCLEOTIDE SEQUENCE [LARGE SCALE GENOMIC DNA]</scope>
    <source>
        <strain>ATCC 700396 / NCK56 / N2 / NCFM</strain>
    </source>
</reference>
<accession>Q5FMD6</accession>